<organism>
    <name type="scientific">Homo sapiens</name>
    <name type="common">Human</name>
    <dbReference type="NCBI Taxonomy" id="9606"/>
    <lineage>
        <taxon>Eukaryota</taxon>
        <taxon>Metazoa</taxon>
        <taxon>Chordata</taxon>
        <taxon>Craniata</taxon>
        <taxon>Vertebrata</taxon>
        <taxon>Euteleostomi</taxon>
        <taxon>Mammalia</taxon>
        <taxon>Eutheria</taxon>
        <taxon>Euarchontoglires</taxon>
        <taxon>Primates</taxon>
        <taxon>Haplorrhini</taxon>
        <taxon>Catarrhini</taxon>
        <taxon>Hominidae</taxon>
        <taxon>Homo</taxon>
    </lineage>
</organism>
<keyword id="KW-0002">3D-structure</keyword>
<keyword id="KW-0378">Hydrolase</keyword>
<keyword id="KW-0539">Nucleus</keyword>
<keyword id="KW-0904">Protein phosphatase</keyword>
<keyword id="KW-1267">Proteomics identification</keyword>
<keyword id="KW-1185">Reference proteome</keyword>
<dbReference type="EC" id="3.1.3.16" evidence="6"/>
<dbReference type="EC" id="3.1.3.48" evidence="6"/>
<dbReference type="EMBL" id="U15932">
    <property type="protein sequence ID" value="AAA64693.2"/>
    <property type="molecule type" value="mRNA"/>
</dbReference>
<dbReference type="EMBL" id="U16996">
    <property type="protein sequence ID" value="AAB06261.1"/>
    <property type="molecule type" value="mRNA"/>
</dbReference>
<dbReference type="EMBL" id="AL355512">
    <property type="status" value="NOT_ANNOTATED_CDS"/>
    <property type="molecule type" value="Genomic_DNA"/>
</dbReference>
<dbReference type="EMBL" id="BC062545">
    <property type="protein sequence ID" value="AAH62545.1"/>
    <property type="molecule type" value="mRNA"/>
</dbReference>
<dbReference type="CCDS" id="CCDS7566.1"/>
<dbReference type="PIR" id="I38890">
    <property type="entry name" value="I38890"/>
</dbReference>
<dbReference type="RefSeq" id="NP_004410.3">
    <property type="nucleotide sequence ID" value="NM_004419.3"/>
</dbReference>
<dbReference type="PDB" id="2G6Z">
    <property type="method" value="X-ray"/>
    <property type="resolution" value="2.70 A"/>
    <property type="chains" value="A/B/C=178-384"/>
</dbReference>
<dbReference type="PDBsum" id="2G6Z"/>
<dbReference type="SMR" id="Q16690"/>
<dbReference type="BioGRID" id="108180">
    <property type="interactions" value="54"/>
</dbReference>
<dbReference type="FunCoup" id="Q16690">
    <property type="interactions" value="2051"/>
</dbReference>
<dbReference type="IntAct" id="Q16690">
    <property type="interactions" value="10"/>
</dbReference>
<dbReference type="MINT" id="Q16690"/>
<dbReference type="STRING" id="9606.ENSP00000358596"/>
<dbReference type="BindingDB" id="Q16690"/>
<dbReference type="ChEMBL" id="CHEMBL1250380"/>
<dbReference type="DEPOD" id="DUSP5"/>
<dbReference type="iPTMnet" id="Q16690"/>
<dbReference type="PhosphoSitePlus" id="Q16690"/>
<dbReference type="BioMuta" id="DUSP5"/>
<dbReference type="DMDM" id="215273975"/>
<dbReference type="MassIVE" id="Q16690"/>
<dbReference type="PaxDb" id="9606-ENSP00000358596"/>
<dbReference type="PeptideAtlas" id="Q16690"/>
<dbReference type="ProteomicsDB" id="61034"/>
<dbReference type="Antibodypedia" id="18355">
    <property type="antibodies" value="304 antibodies from 27 providers"/>
</dbReference>
<dbReference type="DNASU" id="1847"/>
<dbReference type="Ensembl" id="ENST00000369583.4">
    <property type="protein sequence ID" value="ENSP00000358596.3"/>
    <property type="gene ID" value="ENSG00000138166.6"/>
</dbReference>
<dbReference type="GeneID" id="1847"/>
<dbReference type="KEGG" id="hsa:1847"/>
<dbReference type="MANE-Select" id="ENST00000369583.4">
    <property type="protein sequence ID" value="ENSP00000358596.3"/>
    <property type="RefSeq nucleotide sequence ID" value="NM_004419.4"/>
    <property type="RefSeq protein sequence ID" value="NP_004410.3"/>
</dbReference>
<dbReference type="UCSC" id="uc001kzd.4">
    <property type="organism name" value="human"/>
</dbReference>
<dbReference type="AGR" id="HGNC:3071"/>
<dbReference type="CTD" id="1847"/>
<dbReference type="DisGeNET" id="1847"/>
<dbReference type="GeneCards" id="DUSP5"/>
<dbReference type="HGNC" id="HGNC:3071">
    <property type="gene designation" value="DUSP5"/>
</dbReference>
<dbReference type="HPA" id="ENSG00000138166">
    <property type="expression patterns" value="Tissue enhanced (urinary)"/>
</dbReference>
<dbReference type="MIM" id="603069">
    <property type="type" value="gene"/>
</dbReference>
<dbReference type="neXtProt" id="NX_Q16690"/>
<dbReference type="OpenTargets" id="ENSG00000138166"/>
<dbReference type="PharmGKB" id="PA27528"/>
<dbReference type="VEuPathDB" id="HostDB:ENSG00000138166"/>
<dbReference type="eggNOG" id="KOG1716">
    <property type="taxonomic scope" value="Eukaryota"/>
</dbReference>
<dbReference type="GeneTree" id="ENSGT00940000159529"/>
<dbReference type="HOGENOM" id="CLU_027074_0_2_1"/>
<dbReference type="InParanoid" id="Q16690"/>
<dbReference type="OMA" id="CRPYLSY"/>
<dbReference type="OrthoDB" id="165342at2759"/>
<dbReference type="PAN-GO" id="Q16690">
    <property type="GO annotations" value="6 GO annotations based on evolutionary models"/>
</dbReference>
<dbReference type="PhylomeDB" id="Q16690"/>
<dbReference type="TreeFam" id="TF105122"/>
<dbReference type="PathwayCommons" id="Q16690"/>
<dbReference type="Reactome" id="R-HSA-112409">
    <property type="pathway name" value="RAF-independent MAPK1/3 activation"/>
</dbReference>
<dbReference type="Reactome" id="R-HSA-5675221">
    <property type="pathway name" value="Negative regulation of MAPK pathway"/>
</dbReference>
<dbReference type="SignaLink" id="Q16690"/>
<dbReference type="SIGNOR" id="Q16690"/>
<dbReference type="BioGRID-ORCS" id="1847">
    <property type="hits" value="20 hits in 1170 CRISPR screens"/>
</dbReference>
<dbReference type="ChiTaRS" id="DUSP5">
    <property type="organism name" value="human"/>
</dbReference>
<dbReference type="EvolutionaryTrace" id="Q16690"/>
<dbReference type="GeneWiki" id="DUSP5"/>
<dbReference type="GenomeRNAi" id="1847"/>
<dbReference type="Pharos" id="Q16690">
    <property type="development level" value="Tchem"/>
</dbReference>
<dbReference type="PRO" id="PR:Q16690"/>
<dbReference type="Proteomes" id="UP000005640">
    <property type="component" value="Chromosome 10"/>
</dbReference>
<dbReference type="RNAct" id="Q16690">
    <property type="molecule type" value="protein"/>
</dbReference>
<dbReference type="Bgee" id="ENSG00000138166">
    <property type="expression patterns" value="Expressed in lower esophagus mucosa and 184 other cell types or tissues"/>
</dbReference>
<dbReference type="GO" id="GO:0005737">
    <property type="term" value="C:cytoplasm"/>
    <property type="evidence" value="ECO:0000318"/>
    <property type="project" value="GO_Central"/>
</dbReference>
<dbReference type="GO" id="GO:0005654">
    <property type="term" value="C:nucleoplasm"/>
    <property type="evidence" value="ECO:0000304"/>
    <property type="project" value="Reactome"/>
</dbReference>
<dbReference type="GO" id="GO:0005634">
    <property type="term" value="C:nucleus"/>
    <property type="evidence" value="ECO:0000318"/>
    <property type="project" value="GO_Central"/>
</dbReference>
<dbReference type="GO" id="GO:0017017">
    <property type="term" value="F:MAP kinase tyrosine/serine/threonine phosphatase activity"/>
    <property type="evidence" value="ECO:0007669"/>
    <property type="project" value="InterPro"/>
</dbReference>
<dbReference type="GO" id="GO:0016791">
    <property type="term" value="F:phosphatase activity"/>
    <property type="evidence" value="ECO:0000314"/>
    <property type="project" value="UniProtKB"/>
</dbReference>
<dbReference type="GO" id="GO:0004721">
    <property type="term" value="F:phosphoprotein phosphatase activity"/>
    <property type="evidence" value="ECO:0000318"/>
    <property type="project" value="GO_Central"/>
</dbReference>
<dbReference type="GO" id="GO:0004722">
    <property type="term" value="F:protein serine/threonine phosphatase activity"/>
    <property type="evidence" value="ECO:0007669"/>
    <property type="project" value="UniProtKB-EC"/>
</dbReference>
<dbReference type="GO" id="GO:0004725">
    <property type="term" value="F:protein tyrosine phosphatase activity"/>
    <property type="evidence" value="ECO:0000304"/>
    <property type="project" value="ProtInc"/>
</dbReference>
<dbReference type="GO" id="GO:0008138">
    <property type="term" value="F:protein tyrosine/serine/threonine phosphatase activity"/>
    <property type="evidence" value="ECO:0000314"/>
    <property type="project" value="UniProtKB"/>
</dbReference>
<dbReference type="GO" id="GO:0016311">
    <property type="term" value="P:dephosphorylation"/>
    <property type="evidence" value="ECO:0000314"/>
    <property type="project" value="UniProtKB"/>
</dbReference>
<dbReference type="GO" id="GO:0001706">
    <property type="term" value="P:endoderm formation"/>
    <property type="evidence" value="ECO:0000318"/>
    <property type="project" value="GO_Central"/>
</dbReference>
<dbReference type="GO" id="GO:0070371">
    <property type="term" value="P:ERK1 and ERK2 cascade"/>
    <property type="evidence" value="ECO:0000304"/>
    <property type="project" value="Reactome"/>
</dbReference>
<dbReference type="GO" id="GO:0000165">
    <property type="term" value="P:MAPK cascade"/>
    <property type="evidence" value="ECO:0000304"/>
    <property type="project" value="Reactome"/>
</dbReference>
<dbReference type="GO" id="GO:0043409">
    <property type="term" value="P:negative regulation of MAPK cascade"/>
    <property type="evidence" value="ECO:0000318"/>
    <property type="project" value="GO_Central"/>
</dbReference>
<dbReference type="GO" id="GO:0035970">
    <property type="term" value="P:peptidyl-threonine dephosphorylation"/>
    <property type="evidence" value="ECO:0000314"/>
    <property type="project" value="UniProtKB"/>
</dbReference>
<dbReference type="GO" id="GO:0035335">
    <property type="term" value="P:peptidyl-tyrosine dephosphorylation"/>
    <property type="evidence" value="ECO:0000314"/>
    <property type="project" value="UniProtKB"/>
</dbReference>
<dbReference type="GO" id="GO:0006470">
    <property type="term" value="P:protein dephosphorylation"/>
    <property type="evidence" value="ECO:0000304"/>
    <property type="project" value="ProtInc"/>
</dbReference>
<dbReference type="GO" id="GO:0007165">
    <property type="term" value="P:signal transduction"/>
    <property type="evidence" value="ECO:0000318"/>
    <property type="project" value="GO_Central"/>
</dbReference>
<dbReference type="CDD" id="cd14639">
    <property type="entry name" value="DSP_DUSP5"/>
    <property type="match status" value="1"/>
</dbReference>
<dbReference type="CDD" id="cd01446">
    <property type="entry name" value="DSP_MapKP"/>
    <property type="match status" value="1"/>
</dbReference>
<dbReference type="FunFam" id="3.90.190.10:FF:000057">
    <property type="entry name" value="Dual specificity phosphatase 5"/>
    <property type="match status" value="1"/>
</dbReference>
<dbReference type="FunFam" id="3.40.250.10:FF:000023">
    <property type="entry name" value="Dual specificity protein phosphatase"/>
    <property type="match status" value="1"/>
</dbReference>
<dbReference type="Gene3D" id="3.90.190.10">
    <property type="entry name" value="Protein tyrosine phosphatase superfamily"/>
    <property type="match status" value="1"/>
</dbReference>
<dbReference type="Gene3D" id="3.40.250.10">
    <property type="entry name" value="Rhodanese-like domain"/>
    <property type="match status" value="1"/>
</dbReference>
<dbReference type="InterPro" id="IPR000340">
    <property type="entry name" value="Dual-sp_phosphatase_cat-dom"/>
</dbReference>
<dbReference type="InterPro" id="IPR008343">
    <property type="entry name" value="MKP"/>
</dbReference>
<dbReference type="InterPro" id="IPR029021">
    <property type="entry name" value="Prot-tyrosine_phosphatase-like"/>
</dbReference>
<dbReference type="InterPro" id="IPR001763">
    <property type="entry name" value="Rhodanese-like_dom"/>
</dbReference>
<dbReference type="InterPro" id="IPR036873">
    <property type="entry name" value="Rhodanese-like_dom_sf"/>
</dbReference>
<dbReference type="InterPro" id="IPR016130">
    <property type="entry name" value="Tyr_Pase_AS"/>
</dbReference>
<dbReference type="InterPro" id="IPR003595">
    <property type="entry name" value="Tyr_Pase_cat"/>
</dbReference>
<dbReference type="InterPro" id="IPR000387">
    <property type="entry name" value="Tyr_Pase_dom"/>
</dbReference>
<dbReference type="InterPro" id="IPR020422">
    <property type="entry name" value="TYR_PHOSPHATASE_DUAL_dom"/>
</dbReference>
<dbReference type="PANTHER" id="PTHR10159">
    <property type="entry name" value="DUAL SPECIFICITY PROTEIN PHOSPHATASE"/>
    <property type="match status" value="1"/>
</dbReference>
<dbReference type="PANTHER" id="PTHR10159:SF40">
    <property type="entry name" value="DUAL SPECIFICITY PROTEIN PHOSPHATASE 5"/>
    <property type="match status" value="1"/>
</dbReference>
<dbReference type="Pfam" id="PF00782">
    <property type="entry name" value="DSPc"/>
    <property type="match status" value="1"/>
</dbReference>
<dbReference type="Pfam" id="PF00581">
    <property type="entry name" value="Rhodanese"/>
    <property type="match status" value="1"/>
</dbReference>
<dbReference type="PIRSF" id="PIRSF000939">
    <property type="entry name" value="MAPK_Ptase"/>
    <property type="match status" value="1"/>
</dbReference>
<dbReference type="PRINTS" id="PR01764">
    <property type="entry name" value="MAPKPHPHTASE"/>
</dbReference>
<dbReference type="SMART" id="SM00195">
    <property type="entry name" value="DSPc"/>
    <property type="match status" value="1"/>
</dbReference>
<dbReference type="SMART" id="SM00404">
    <property type="entry name" value="PTPc_motif"/>
    <property type="match status" value="1"/>
</dbReference>
<dbReference type="SMART" id="SM00450">
    <property type="entry name" value="RHOD"/>
    <property type="match status" value="1"/>
</dbReference>
<dbReference type="SUPFAM" id="SSF52799">
    <property type="entry name" value="(Phosphotyrosine protein) phosphatases II"/>
    <property type="match status" value="1"/>
</dbReference>
<dbReference type="SUPFAM" id="SSF52821">
    <property type="entry name" value="Rhodanese/Cell cycle control phosphatase"/>
    <property type="match status" value="1"/>
</dbReference>
<dbReference type="PROSITE" id="PS50206">
    <property type="entry name" value="RHODANESE_3"/>
    <property type="match status" value="1"/>
</dbReference>
<dbReference type="PROSITE" id="PS00383">
    <property type="entry name" value="TYR_PHOSPHATASE_1"/>
    <property type="match status" value="1"/>
</dbReference>
<dbReference type="PROSITE" id="PS50056">
    <property type="entry name" value="TYR_PHOSPHATASE_2"/>
    <property type="match status" value="1"/>
</dbReference>
<dbReference type="PROSITE" id="PS50054">
    <property type="entry name" value="TYR_PHOSPHATASE_DUAL"/>
    <property type="match status" value="1"/>
</dbReference>
<accession>Q16690</accession>
<accession>Q12997</accession>
<accession>Q5T603</accession>
<evidence type="ECO:0000255" key="1"/>
<evidence type="ECO:0000255" key="2">
    <source>
        <dbReference type="PROSITE-ProRule" id="PRU00160"/>
    </source>
</evidence>
<evidence type="ECO:0000255" key="3">
    <source>
        <dbReference type="PROSITE-ProRule" id="PRU00173"/>
    </source>
</evidence>
<evidence type="ECO:0000255" key="4">
    <source>
        <dbReference type="PROSITE-ProRule" id="PRU10044"/>
    </source>
</evidence>
<evidence type="ECO:0000269" key="5">
    <source>
    </source>
</evidence>
<evidence type="ECO:0000269" key="6">
    <source>
    </source>
</evidence>
<evidence type="ECO:0000305" key="7"/>
<evidence type="ECO:0007829" key="8">
    <source>
        <dbReference type="PDB" id="2G6Z"/>
    </source>
</evidence>
<comment type="function">
    <text evidence="6">Dual specificity protein phosphatase; active with phosphotyrosine, phosphoserine and phosphothreonine residues. The highest relative activity is toward ERK1.</text>
</comment>
<comment type="catalytic activity">
    <reaction evidence="4 6">
        <text>O-phospho-L-tyrosyl-[protein] + H2O = L-tyrosyl-[protein] + phosphate</text>
        <dbReference type="Rhea" id="RHEA:10684"/>
        <dbReference type="Rhea" id="RHEA-COMP:10136"/>
        <dbReference type="Rhea" id="RHEA-COMP:20101"/>
        <dbReference type="ChEBI" id="CHEBI:15377"/>
        <dbReference type="ChEBI" id="CHEBI:43474"/>
        <dbReference type="ChEBI" id="CHEBI:46858"/>
        <dbReference type="ChEBI" id="CHEBI:61978"/>
        <dbReference type="EC" id="3.1.3.48"/>
    </reaction>
</comment>
<comment type="catalytic activity">
    <reaction evidence="6">
        <text>O-phospho-L-seryl-[protein] + H2O = L-seryl-[protein] + phosphate</text>
        <dbReference type="Rhea" id="RHEA:20629"/>
        <dbReference type="Rhea" id="RHEA-COMP:9863"/>
        <dbReference type="Rhea" id="RHEA-COMP:11604"/>
        <dbReference type="ChEBI" id="CHEBI:15377"/>
        <dbReference type="ChEBI" id="CHEBI:29999"/>
        <dbReference type="ChEBI" id="CHEBI:43474"/>
        <dbReference type="ChEBI" id="CHEBI:83421"/>
        <dbReference type="EC" id="3.1.3.16"/>
    </reaction>
</comment>
<comment type="catalytic activity">
    <reaction evidence="6">
        <text>O-phospho-L-threonyl-[protein] + H2O = L-threonyl-[protein] + phosphate</text>
        <dbReference type="Rhea" id="RHEA:47004"/>
        <dbReference type="Rhea" id="RHEA-COMP:11060"/>
        <dbReference type="Rhea" id="RHEA-COMP:11605"/>
        <dbReference type="ChEBI" id="CHEBI:15377"/>
        <dbReference type="ChEBI" id="CHEBI:30013"/>
        <dbReference type="ChEBI" id="CHEBI:43474"/>
        <dbReference type="ChEBI" id="CHEBI:61977"/>
        <dbReference type="EC" id="3.1.3.16"/>
    </reaction>
</comment>
<comment type="interaction">
    <interactant intactId="EBI-7487376">
        <id>Q16690</id>
    </interactant>
    <interactant intactId="EBI-959949">
        <id>P28482</id>
        <label>MAPK1</label>
    </interactant>
    <organismsDiffer>false</organismsDiffer>
    <experiments>3</experiments>
</comment>
<comment type="subcellular location">
    <subcellularLocation>
        <location evidence="7">Nucleus</location>
    </subcellularLocation>
</comment>
<comment type="similarity">
    <text evidence="7">Belongs to the protein-tyrosine phosphatase family. Non-receptor class dual specificity subfamily.</text>
</comment>
<gene>
    <name type="primary">DUSP5</name>
    <name type="synonym">VH3</name>
</gene>
<protein>
    <recommendedName>
        <fullName>Dual specificity protein phosphatase 5</fullName>
        <ecNumber evidence="6">3.1.3.16</ecNumber>
        <ecNumber evidence="6">3.1.3.48</ecNumber>
    </recommendedName>
    <alternativeName>
        <fullName>Dual specificity protein phosphatase hVH3</fullName>
    </alternativeName>
</protein>
<sequence length="384" mass="42047">MKVTSLDGRQLRKMLRKEAAARCVVLDCRPYLAFAASNVRGSLNVNLNSVVLRRARGGAVSARYVLPDEAARARLLQEGGGGVAAVVVLDQGSRHWQKLREESAARVVLTSLLACLPAGPRVYFLKGGYETFYSEYPECCVDVKPISQEKIESERALISQCGKPVVNVSYRPAYDQGGPVEILPFLYLGSAYHASKCEFLANLHITALLNVSRRTSEACATHLHYKWIPVEDSHTADISSHFQEAIDFIDCVREKGGKVLVHCEAGISRSPTICMAYLMKTKQFRLKEAFDYIKQRRSMVSPNFGFMGQLLQYESEILPSTPNPQPPSCQGEAAGSSLIGHLQTLSPDMQGAYCTFPASVLAPVPTHSTVSELSRSPVATATSC</sequence>
<reference key="1">
    <citation type="journal article" date="1994" name="J. Biol. Chem.">
        <title>A novel dual specificity phosphatase induced by serum stimulation and heat shock.</title>
        <authorList>
            <person name="Ishibashi T."/>
            <person name="Bottaro D.P."/>
            <person name="Michieli P."/>
            <person name="Kelley C.A."/>
            <person name="Aaronson S.A."/>
        </authorList>
    </citation>
    <scope>NUCLEOTIDE SEQUENCE [MRNA]</scope>
    <scope>FUNCTION</scope>
    <scope>CATALYTIC ACTIVITY</scope>
    <source>
        <tissue>Mammary gland</tissue>
    </source>
</reference>
<reference key="2">
    <citation type="submission" date="2000-08" db="EMBL/GenBank/DDBJ databases">
        <authorList>
            <person name="Bottaro D.P."/>
        </authorList>
    </citation>
    <scope>SEQUENCE REVISION</scope>
</reference>
<reference key="3">
    <citation type="journal article" date="1995" name="J. Biol. Chem.">
        <title>Multiple dual specificity protein tyrosine phosphatases are expressed and regulated differentially in liver cell lines.</title>
        <authorList>
            <person name="Kwak S.P."/>
            <person name="Dixon J.E."/>
        </authorList>
    </citation>
    <scope>NUCLEOTIDE SEQUENCE [MRNA]</scope>
    <source>
        <tissue>Placenta</tissue>
    </source>
</reference>
<reference key="4">
    <citation type="journal article" date="2004" name="Nature">
        <title>The DNA sequence and comparative analysis of human chromosome 10.</title>
        <authorList>
            <person name="Deloukas P."/>
            <person name="Earthrowl M.E."/>
            <person name="Grafham D.V."/>
            <person name="Rubenfield M."/>
            <person name="French L."/>
            <person name="Steward C.A."/>
            <person name="Sims S.K."/>
            <person name="Jones M.C."/>
            <person name="Searle S."/>
            <person name="Scott C."/>
            <person name="Howe K."/>
            <person name="Hunt S.E."/>
            <person name="Andrews T.D."/>
            <person name="Gilbert J.G.R."/>
            <person name="Swarbreck D."/>
            <person name="Ashurst J.L."/>
            <person name="Taylor A."/>
            <person name="Battles J."/>
            <person name="Bird C.P."/>
            <person name="Ainscough R."/>
            <person name="Almeida J.P."/>
            <person name="Ashwell R.I.S."/>
            <person name="Ambrose K.D."/>
            <person name="Babbage A.K."/>
            <person name="Bagguley C.L."/>
            <person name="Bailey J."/>
            <person name="Banerjee R."/>
            <person name="Bates K."/>
            <person name="Beasley H."/>
            <person name="Bray-Allen S."/>
            <person name="Brown A.J."/>
            <person name="Brown J.Y."/>
            <person name="Burford D.C."/>
            <person name="Burrill W."/>
            <person name="Burton J."/>
            <person name="Cahill P."/>
            <person name="Camire D."/>
            <person name="Carter N.P."/>
            <person name="Chapman J.C."/>
            <person name="Clark S.Y."/>
            <person name="Clarke G."/>
            <person name="Clee C.M."/>
            <person name="Clegg S."/>
            <person name="Corby N."/>
            <person name="Coulson A."/>
            <person name="Dhami P."/>
            <person name="Dutta I."/>
            <person name="Dunn M."/>
            <person name="Faulkner L."/>
            <person name="Frankish A."/>
            <person name="Frankland J.A."/>
            <person name="Garner P."/>
            <person name="Garnett J."/>
            <person name="Gribble S."/>
            <person name="Griffiths C."/>
            <person name="Grocock R."/>
            <person name="Gustafson E."/>
            <person name="Hammond S."/>
            <person name="Harley J.L."/>
            <person name="Hart E."/>
            <person name="Heath P.D."/>
            <person name="Ho T.P."/>
            <person name="Hopkins B."/>
            <person name="Horne J."/>
            <person name="Howden P.J."/>
            <person name="Huckle E."/>
            <person name="Hynds C."/>
            <person name="Johnson C."/>
            <person name="Johnson D."/>
            <person name="Kana A."/>
            <person name="Kay M."/>
            <person name="Kimberley A.M."/>
            <person name="Kershaw J.K."/>
            <person name="Kokkinaki M."/>
            <person name="Laird G.K."/>
            <person name="Lawlor S."/>
            <person name="Lee H.M."/>
            <person name="Leongamornlert D.A."/>
            <person name="Laird G."/>
            <person name="Lloyd C."/>
            <person name="Lloyd D.M."/>
            <person name="Loveland J."/>
            <person name="Lovell J."/>
            <person name="McLaren S."/>
            <person name="McLay K.E."/>
            <person name="McMurray A."/>
            <person name="Mashreghi-Mohammadi M."/>
            <person name="Matthews L."/>
            <person name="Milne S."/>
            <person name="Nickerson T."/>
            <person name="Nguyen M."/>
            <person name="Overton-Larty E."/>
            <person name="Palmer S.A."/>
            <person name="Pearce A.V."/>
            <person name="Peck A.I."/>
            <person name="Pelan S."/>
            <person name="Phillimore B."/>
            <person name="Porter K."/>
            <person name="Rice C.M."/>
            <person name="Rogosin A."/>
            <person name="Ross M.T."/>
            <person name="Sarafidou T."/>
            <person name="Sehra H.K."/>
            <person name="Shownkeen R."/>
            <person name="Skuce C.D."/>
            <person name="Smith M."/>
            <person name="Standring L."/>
            <person name="Sycamore N."/>
            <person name="Tester J."/>
            <person name="Thorpe A."/>
            <person name="Torcasso W."/>
            <person name="Tracey A."/>
            <person name="Tromans A."/>
            <person name="Tsolas J."/>
            <person name="Wall M."/>
            <person name="Walsh J."/>
            <person name="Wang H."/>
            <person name="Weinstock K."/>
            <person name="West A.P."/>
            <person name="Willey D.L."/>
            <person name="Whitehead S.L."/>
            <person name="Wilming L."/>
            <person name="Wray P.W."/>
            <person name="Young L."/>
            <person name="Chen Y."/>
            <person name="Lovering R.C."/>
            <person name="Moschonas N.K."/>
            <person name="Siebert R."/>
            <person name="Fechtel K."/>
            <person name="Bentley D."/>
            <person name="Durbin R.M."/>
            <person name="Hubbard T."/>
            <person name="Doucette-Stamm L."/>
            <person name="Beck S."/>
            <person name="Smith D.R."/>
            <person name="Rogers J."/>
        </authorList>
    </citation>
    <scope>NUCLEOTIDE SEQUENCE [LARGE SCALE GENOMIC DNA]</scope>
</reference>
<reference key="5">
    <citation type="journal article" date="2004" name="Genome Res.">
        <title>The status, quality, and expansion of the NIH full-length cDNA project: the Mammalian Gene Collection (MGC).</title>
        <authorList>
            <consortium name="The MGC Project Team"/>
        </authorList>
    </citation>
    <scope>NUCLEOTIDE SEQUENCE [LARGE SCALE MRNA]</scope>
    <source>
        <tissue>Lymph</tissue>
    </source>
</reference>
<reference key="6">
    <citation type="journal article" date="2007" name="Proteins">
        <title>Crystal structure of the catalytic domain of human DUSP5, a dual specificity MAP kinase protein phosphatase.</title>
        <authorList>
            <person name="Jeong D.G."/>
            <person name="Cho Y.H."/>
            <person name="Yoon T.S."/>
            <person name="Kim J.H."/>
            <person name="Ryu S.E."/>
            <person name="Kim S.J."/>
        </authorList>
    </citation>
    <scope>X-RAY CRYSTALLOGRAPHY (2.7 ANGSTROMS) OF 178-384</scope>
    <scope>ACTIVE SITE</scope>
</reference>
<proteinExistence type="evidence at protein level"/>
<name>DUS5_HUMAN</name>
<feature type="chain" id="PRO_0000094802" description="Dual specificity protein phosphatase 5">
    <location>
        <begin position="1"/>
        <end position="384"/>
    </location>
</feature>
<feature type="domain" description="Rhodanese" evidence="3">
    <location>
        <begin position="19"/>
        <end position="141"/>
    </location>
</feature>
<feature type="domain" description="Tyrosine-protein phosphatase" evidence="2">
    <location>
        <begin position="178"/>
        <end position="319"/>
    </location>
</feature>
<feature type="short sequence motif" description="Nuclear localization signal" evidence="1">
    <location>
        <begin position="53"/>
        <end position="74"/>
    </location>
</feature>
<feature type="active site" description="Phosphocysteine intermediate" evidence="2 5">
    <location>
        <position position="263"/>
    </location>
</feature>
<feature type="sequence variant" id="VAR_020298" description="In dbSNP:rs2282238.">
    <original>E</original>
    <variation>D</variation>
    <location>
        <position position="154"/>
    </location>
</feature>
<feature type="sequence variant" id="VAR_059777" description="In dbSNP:rs1889566.">
    <original>A</original>
    <variation>T</variation>
    <location>
        <position position="220"/>
    </location>
</feature>
<feature type="sequence variant" id="VAR_059778" description="In dbSNP:rs1889565.">
    <original>A</original>
    <variation>V</variation>
    <location>
        <position position="220"/>
    </location>
</feature>
<feature type="sequence variant" id="VAR_047368" description="In dbSNP:rs35101549.">
    <original>P</original>
    <variation>L</variation>
    <location>
        <position position="322"/>
    </location>
</feature>
<feature type="sequence conflict" description="In Ref. 1; AAA64693." evidence="7" ref="1">
    <original>RQL</original>
    <variation>GHV</variation>
    <location>
        <begin position="9"/>
        <end position="11"/>
    </location>
</feature>
<feature type="sequence conflict" description="In Ref. 1; AAA64693." evidence="7" ref="1">
    <original>A</original>
    <variation>R</variation>
    <location>
        <position position="71"/>
    </location>
</feature>
<feature type="sequence conflict" description="In Ref. 1; AAA64693." evidence="7" ref="1">
    <original>AR</original>
    <variation>F</variation>
    <location>
        <begin position="105"/>
        <end position="106"/>
    </location>
</feature>
<feature type="sequence conflict" description="In Ref. 1; AAA64693, 3; AAB06261 and 5; AAH62545." evidence="7" ref="1 3 5">
    <original>A</original>
    <variation>M</variation>
    <location>
        <position position="220"/>
    </location>
</feature>
<feature type="sequence conflict" description="In Ref. 1; AAA64693." evidence="7" ref="1">
    <original>T</original>
    <variation>Q</variation>
    <location>
        <position position="382"/>
    </location>
</feature>
<feature type="strand" evidence="8">
    <location>
        <begin position="180"/>
        <end position="183"/>
    </location>
</feature>
<feature type="strand" evidence="8">
    <location>
        <begin position="186"/>
        <end position="190"/>
    </location>
</feature>
<feature type="helix" evidence="8">
    <location>
        <begin position="191"/>
        <end position="194"/>
    </location>
</feature>
<feature type="helix" evidence="8">
    <location>
        <begin position="197"/>
        <end position="203"/>
    </location>
</feature>
<feature type="strand" evidence="8">
    <location>
        <begin position="207"/>
        <end position="210"/>
    </location>
</feature>
<feature type="strand" evidence="8">
    <location>
        <begin position="223"/>
        <end position="227"/>
    </location>
</feature>
<feature type="helix" evidence="8">
    <location>
        <begin position="239"/>
        <end position="241"/>
    </location>
</feature>
<feature type="helix" evidence="8">
    <location>
        <begin position="242"/>
        <end position="254"/>
    </location>
</feature>
<feature type="strand" evidence="8">
    <location>
        <begin position="259"/>
        <end position="268"/>
    </location>
</feature>
<feature type="helix" evidence="8">
    <location>
        <begin position="269"/>
        <end position="282"/>
    </location>
</feature>
<feature type="helix" evidence="8">
    <location>
        <begin position="286"/>
        <end position="296"/>
    </location>
</feature>
<feature type="helix" evidence="8">
    <location>
        <begin position="304"/>
        <end position="317"/>
    </location>
</feature>